<dbReference type="EC" id="4.1.1.39" evidence="1"/>
<dbReference type="EMBL" id="L01886">
    <property type="protein sequence ID" value="AAA84088.1"/>
    <property type="molecule type" value="Genomic_DNA"/>
</dbReference>
<dbReference type="SMR" id="P28382"/>
<dbReference type="GO" id="GO:0009507">
    <property type="term" value="C:chloroplast"/>
    <property type="evidence" value="ECO:0007669"/>
    <property type="project" value="UniProtKB-SubCell"/>
</dbReference>
<dbReference type="GO" id="GO:0000287">
    <property type="term" value="F:magnesium ion binding"/>
    <property type="evidence" value="ECO:0007669"/>
    <property type="project" value="InterPro"/>
</dbReference>
<dbReference type="GO" id="GO:0004497">
    <property type="term" value="F:monooxygenase activity"/>
    <property type="evidence" value="ECO:0007669"/>
    <property type="project" value="UniProtKB-KW"/>
</dbReference>
<dbReference type="GO" id="GO:0016984">
    <property type="term" value="F:ribulose-bisphosphate carboxylase activity"/>
    <property type="evidence" value="ECO:0007669"/>
    <property type="project" value="UniProtKB-EC"/>
</dbReference>
<dbReference type="GO" id="GO:0009853">
    <property type="term" value="P:photorespiration"/>
    <property type="evidence" value="ECO:0007669"/>
    <property type="project" value="UniProtKB-KW"/>
</dbReference>
<dbReference type="GO" id="GO:0019253">
    <property type="term" value="P:reductive pentose-phosphate cycle"/>
    <property type="evidence" value="ECO:0007669"/>
    <property type="project" value="UniProtKB-KW"/>
</dbReference>
<dbReference type="CDD" id="cd08212">
    <property type="entry name" value="RuBisCO_large_I"/>
    <property type="match status" value="1"/>
</dbReference>
<dbReference type="FunFam" id="3.20.20.110:FF:000001">
    <property type="entry name" value="Ribulose bisphosphate carboxylase large chain"/>
    <property type="match status" value="1"/>
</dbReference>
<dbReference type="FunFam" id="3.30.70.150:FF:000001">
    <property type="entry name" value="Ribulose bisphosphate carboxylase large chain"/>
    <property type="match status" value="1"/>
</dbReference>
<dbReference type="Gene3D" id="3.20.20.110">
    <property type="entry name" value="Ribulose bisphosphate carboxylase, large subunit, C-terminal domain"/>
    <property type="match status" value="1"/>
</dbReference>
<dbReference type="Gene3D" id="3.30.70.150">
    <property type="entry name" value="RuBisCO large subunit, N-terminal domain"/>
    <property type="match status" value="1"/>
</dbReference>
<dbReference type="HAMAP" id="MF_01338">
    <property type="entry name" value="RuBisCO_L_type1"/>
    <property type="match status" value="1"/>
</dbReference>
<dbReference type="InterPro" id="IPR033966">
    <property type="entry name" value="RuBisCO"/>
</dbReference>
<dbReference type="InterPro" id="IPR020878">
    <property type="entry name" value="RuBisCo_large_chain_AS"/>
</dbReference>
<dbReference type="InterPro" id="IPR000685">
    <property type="entry name" value="RuBisCO_lsu_C"/>
</dbReference>
<dbReference type="InterPro" id="IPR036376">
    <property type="entry name" value="RuBisCO_lsu_C_sf"/>
</dbReference>
<dbReference type="InterPro" id="IPR017443">
    <property type="entry name" value="RuBisCO_lsu_fd_N"/>
</dbReference>
<dbReference type="InterPro" id="IPR036422">
    <property type="entry name" value="RuBisCO_lsu_N_sf"/>
</dbReference>
<dbReference type="InterPro" id="IPR020888">
    <property type="entry name" value="RuBisCO_lsuI"/>
</dbReference>
<dbReference type="NCBIfam" id="NF003252">
    <property type="entry name" value="PRK04208.1"/>
    <property type="match status" value="1"/>
</dbReference>
<dbReference type="PANTHER" id="PTHR42704">
    <property type="entry name" value="RIBULOSE BISPHOSPHATE CARBOXYLASE"/>
    <property type="match status" value="1"/>
</dbReference>
<dbReference type="PANTHER" id="PTHR42704:SF15">
    <property type="entry name" value="RIBULOSE BISPHOSPHATE CARBOXYLASE LARGE CHAIN"/>
    <property type="match status" value="1"/>
</dbReference>
<dbReference type="Pfam" id="PF00016">
    <property type="entry name" value="RuBisCO_large"/>
    <property type="match status" value="1"/>
</dbReference>
<dbReference type="Pfam" id="PF02788">
    <property type="entry name" value="RuBisCO_large_N"/>
    <property type="match status" value="1"/>
</dbReference>
<dbReference type="SFLD" id="SFLDG01052">
    <property type="entry name" value="RuBisCO"/>
    <property type="match status" value="1"/>
</dbReference>
<dbReference type="SFLD" id="SFLDS00014">
    <property type="entry name" value="RuBisCO"/>
    <property type="match status" value="1"/>
</dbReference>
<dbReference type="SFLD" id="SFLDG00301">
    <property type="entry name" value="RuBisCO-like_proteins"/>
    <property type="match status" value="1"/>
</dbReference>
<dbReference type="SUPFAM" id="SSF51649">
    <property type="entry name" value="RuBisCo, C-terminal domain"/>
    <property type="match status" value="1"/>
</dbReference>
<dbReference type="SUPFAM" id="SSF54966">
    <property type="entry name" value="RuBisCO, large subunit, small (N-terminal) domain"/>
    <property type="match status" value="1"/>
</dbReference>
<dbReference type="PROSITE" id="PS00157">
    <property type="entry name" value="RUBISCO_LARGE"/>
    <property type="match status" value="1"/>
</dbReference>
<reference key="1">
    <citation type="journal article" date="1992" name="Science">
        <title>Carnivorous plants: phylogeny and structural evolution.</title>
        <authorList>
            <person name="Albert V.A."/>
            <person name="Williams S.E."/>
            <person name="Chase M.W."/>
        </authorList>
    </citation>
    <scope>NUCLEOTIDE SEQUENCE [GENOMIC DNA]</scope>
</reference>
<proteinExistence type="inferred from homology"/>
<sequence>VGFKAGVKEYKLTYYTPEYETKDTDILAAFRVTPQPGVPPEEAGAAVAAESSTGTWTTVWTDGLTSLDRYKGRCYNIEPVAGETDQYICYVAYPLDLFEEGSVTNMFTSIVGNVFGFKALRALRLEDLRIPTAYVKTFQGPPHGIQVERDKLNKYGRPLLGCTIKPKLGLSAKNYGRACYECLRGGLDFTKDDENVNSQPFMRWRDRFLFCAEAIYKSQAETGEIKGHYLNATAGTCEEMMKRAVFARELGVPIIMFDYLTGGFTANTSLAHYCRDNGLLLHIHRAMHAVIDRQKNHGMHFRVLAKALRMSGGDHIHAGTVVGKLEGERDITLGFVDLLRDDFIEKDRSRGIYFTQDWVSLPGVIPVASGGIHVWHMPALTEIFGDDSVLQFGGGTLGHPWGNAPGAVANRVALEACVQARNEGRDLAAEGNAIIREASKWSPELAAACEVWKEIKFEFKAVDTLD</sequence>
<protein>
    <recommendedName>
        <fullName evidence="1">Ribulose bisphosphate carboxylase large chain</fullName>
        <shortName evidence="1">RuBisCO large subunit</shortName>
        <ecNumber evidence="1">4.1.1.39</ecNumber>
    </recommendedName>
</protein>
<keyword id="KW-0113">Calvin cycle</keyword>
<keyword id="KW-0120">Carbon dioxide fixation</keyword>
<keyword id="KW-0150">Chloroplast</keyword>
<keyword id="KW-1015">Disulfide bond</keyword>
<keyword id="KW-0456">Lyase</keyword>
<keyword id="KW-0460">Magnesium</keyword>
<keyword id="KW-0479">Metal-binding</keyword>
<keyword id="KW-0488">Methylation</keyword>
<keyword id="KW-0503">Monooxygenase</keyword>
<keyword id="KW-0560">Oxidoreductase</keyword>
<keyword id="KW-0601">Photorespiration</keyword>
<keyword id="KW-0602">Photosynthesis</keyword>
<keyword id="KW-0934">Plastid</keyword>
<comment type="function">
    <text evidence="1">RuBisCO catalyzes two reactions: the carboxylation of D-ribulose 1,5-bisphosphate, the primary event in carbon dioxide fixation, as well as the oxidative fragmentation of the pentose substrate in the photorespiration process. Both reactions occur simultaneously and in competition at the same active site.</text>
</comment>
<comment type="catalytic activity">
    <reaction evidence="1">
        <text>2 (2R)-3-phosphoglycerate + 2 H(+) = D-ribulose 1,5-bisphosphate + CO2 + H2O</text>
        <dbReference type="Rhea" id="RHEA:23124"/>
        <dbReference type="ChEBI" id="CHEBI:15377"/>
        <dbReference type="ChEBI" id="CHEBI:15378"/>
        <dbReference type="ChEBI" id="CHEBI:16526"/>
        <dbReference type="ChEBI" id="CHEBI:57870"/>
        <dbReference type="ChEBI" id="CHEBI:58272"/>
        <dbReference type="EC" id="4.1.1.39"/>
    </reaction>
</comment>
<comment type="catalytic activity">
    <reaction evidence="1">
        <text>D-ribulose 1,5-bisphosphate + O2 = 2-phosphoglycolate + (2R)-3-phosphoglycerate + 2 H(+)</text>
        <dbReference type="Rhea" id="RHEA:36631"/>
        <dbReference type="ChEBI" id="CHEBI:15378"/>
        <dbReference type="ChEBI" id="CHEBI:15379"/>
        <dbReference type="ChEBI" id="CHEBI:57870"/>
        <dbReference type="ChEBI" id="CHEBI:58033"/>
        <dbReference type="ChEBI" id="CHEBI:58272"/>
    </reaction>
</comment>
<comment type="cofactor">
    <cofactor evidence="1">
        <name>Mg(2+)</name>
        <dbReference type="ChEBI" id="CHEBI:18420"/>
    </cofactor>
    <text evidence="1">Binds 1 Mg(2+) ion per subunit.</text>
</comment>
<comment type="subunit">
    <text evidence="1">Heterohexadecamer of 8 large chains and 8 small chains; disulfide-linked. The disulfide link is formed within the large subunit homodimers.</text>
</comment>
<comment type="subcellular location">
    <subcellularLocation>
        <location>Plastid</location>
        <location>Chloroplast</location>
    </subcellularLocation>
</comment>
<comment type="PTM">
    <text evidence="1">The disulfide bond which can form in the large chain dimeric partners within the hexadecamer appears to be associated with oxidative stress and protein turnover.</text>
</comment>
<comment type="miscellaneous">
    <text evidence="1">The basic functional RuBisCO is composed of a large chain homodimer in a 'head-to-tail' conformation. In form I RuBisCO this homodimer is arranged in a barrel-like tetramer with the small subunits forming a tetrameric 'cap' on each end of the 'barrel'.</text>
</comment>
<comment type="similarity">
    <text evidence="1">Belongs to the RuBisCO large chain family. Type I subfamily.</text>
</comment>
<accession>P28382</accession>
<organism>
    <name type="scientific">Barleria prionitis</name>
    <name type="common">Porcupine flower</name>
    <dbReference type="NCBI Taxonomy" id="4189"/>
    <lineage>
        <taxon>Eukaryota</taxon>
        <taxon>Viridiplantae</taxon>
        <taxon>Streptophyta</taxon>
        <taxon>Embryophyta</taxon>
        <taxon>Tracheophyta</taxon>
        <taxon>Spermatophyta</taxon>
        <taxon>Magnoliopsida</taxon>
        <taxon>eudicotyledons</taxon>
        <taxon>Gunneridae</taxon>
        <taxon>Pentapetalae</taxon>
        <taxon>asterids</taxon>
        <taxon>lamiids</taxon>
        <taxon>Lamiales</taxon>
        <taxon>Acanthaceae</taxon>
        <taxon>Acanthoideae</taxon>
        <taxon>Barlerieae</taxon>
        <taxon>Barleria</taxon>
    </lineage>
</organism>
<gene>
    <name evidence="1" type="primary">rbcL</name>
</gene>
<feature type="chain" id="PRO_0000062370" description="Ribulose bisphosphate carboxylase large chain">
    <location>
        <begin position="1" status="less than"/>
        <end position="466"/>
    </location>
</feature>
<feature type="active site" description="Proton acceptor" evidence="1">
    <location>
        <position position="165"/>
    </location>
</feature>
<feature type="active site" description="Proton acceptor" evidence="1">
    <location>
        <position position="284"/>
    </location>
</feature>
<feature type="binding site" description="in homodimeric partner" evidence="1">
    <location>
        <position position="113"/>
    </location>
    <ligand>
        <name>substrate</name>
    </ligand>
</feature>
<feature type="binding site" evidence="1">
    <location>
        <position position="163"/>
    </location>
    <ligand>
        <name>substrate</name>
    </ligand>
</feature>
<feature type="binding site" evidence="1">
    <location>
        <position position="167"/>
    </location>
    <ligand>
        <name>substrate</name>
    </ligand>
</feature>
<feature type="binding site" description="via carbamate group" evidence="1">
    <location>
        <position position="191"/>
    </location>
    <ligand>
        <name>Mg(2+)</name>
        <dbReference type="ChEBI" id="CHEBI:18420"/>
    </ligand>
</feature>
<feature type="binding site" evidence="1">
    <location>
        <position position="193"/>
    </location>
    <ligand>
        <name>Mg(2+)</name>
        <dbReference type="ChEBI" id="CHEBI:18420"/>
    </ligand>
</feature>
<feature type="binding site" evidence="1">
    <location>
        <position position="194"/>
    </location>
    <ligand>
        <name>Mg(2+)</name>
        <dbReference type="ChEBI" id="CHEBI:18420"/>
    </ligand>
</feature>
<feature type="binding site" evidence="1">
    <location>
        <position position="285"/>
    </location>
    <ligand>
        <name>substrate</name>
    </ligand>
</feature>
<feature type="binding site" evidence="1">
    <location>
        <position position="317"/>
    </location>
    <ligand>
        <name>substrate</name>
    </ligand>
</feature>
<feature type="binding site" evidence="1">
    <location>
        <position position="369"/>
    </location>
    <ligand>
        <name>substrate</name>
    </ligand>
</feature>
<feature type="site" description="Transition state stabilizer" evidence="1">
    <location>
        <position position="324"/>
    </location>
</feature>
<feature type="modified residue" description="N6,N6,N6-trimethyllysine" evidence="1">
    <location>
        <position position="4"/>
    </location>
</feature>
<feature type="modified residue" description="N6-carboxylysine" evidence="1">
    <location>
        <position position="191"/>
    </location>
</feature>
<feature type="disulfide bond" description="Interchain; in linked form" evidence="1">
    <location>
        <position position="237"/>
    </location>
</feature>
<feature type="non-terminal residue">
    <location>
        <position position="1"/>
    </location>
</feature>
<name>RBL_BARPR</name>
<evidence type="ECO:0000255" key="1">
    <source>
        <dbReference type="HAMAP-Rule" id="MF_01338"/>
    </source>
</evidence>
<geneLocation type="chloroplast"/>